<protein>
    <recommendedName>
        <fullName>ADP-ribosylation factor D</fullName>
    </recommendedName>
</protein>
<accession>Q54I24</accession>
<comment type="function">
    <text evidence="1">GTP-binding protein involved in protein trafficking; may modulate vesicle budding and uncoating within the Golgi apparatus.</text>
</comment>
<comment type="subcellular location">
    <subcellularLocation>
        <location evidence="1">Golgi apparatus</location>
    </subcellularLocation>
</comment>
<comment type="similarity">
    <text evidence="3">Belongs to the small GTPase superfamily. Arf family.</text>
</comment>
<keyword id="KW-0333">Golgi apparatus</keyword>
<keyword id="KW-0342">GTP-binding</keyword>
<keyword id="KW-0547">Nucleotide-binding</keyword>
<keyword id="KW-0653">Protein transport</keyword>
<keyword id="KW-1185">Reference proteome</keyword>
<keyword id="KW-0813">Transport</keyword>
<dbReference type="EMBL" id="AAFI02000129">
    <property type="protein sequence ID" value="EAL62913.2"/>
    <property type="molecule type" value="Genomic_DNA"/>
</dbReference>
<dbReference type="RefSeq" id="XP_636410.2">
    <property type="nucleotide sequence ID" value="XM_631318.2"/>
</dbReference>
<dbReference type="SMR" id="Q54I24"/>
<dbReference type="FunCoup" id="Q54I24">
    <property type="interactions" value="82"/>
</dbReference>
<dbReference type="STRING" id="44689.Q54I24"/>
<dbReference type="PaxDb" id="44689-DDB0229377"/>
<dbReference type="EnsemblProtists" id="EAL62913">
    <property type="protein sequence ID" value="EAL62913"/>
    <property type="gene ID" value="DDB_G0289069"/>
</dbReference>
<dbReference type="GeneID" id="8626939"/>
<dbReference type="KEGG" id="ddi:DDB_G0289069"/>
<dbReference type="dictyBase" id="DDB_G0289069">
    <property type="gene designation" value="arrD"/>
</dbReference>
<dbReference type="VEuPathDB" id="AmoebaDB:DDB_G0289069"/>
<dbReference type="eggNOG" id="KOG0070">
    <property type="taxonomic scope" value="Eukaryota"/>
</dbReference>
<dbReference type="HOGENOM" id="CLU_040729_9_3_1"/>
<dbReference type="InParanoid" id="Q54I24"/>
<dbReference type="OMA" id="DCISPME"/>
<dbReference type="PhylomeDB" id="Q54I24"/>
<dbReference type="Reactome" id="R-DDI-1660514">
    <property type="pathway name" value="Synthesis of PIPs at the Golgi membrane"/>
</dbReference>
<dbReference type="Reactome" id="R-DDI-199992">
    <property type="pathway name" value="trans-Golgi Network Vesicle Budding"/>
</dbReference>
<dbReference type="Reactome" id="R-DDI-5620916">
    <property type="pathway name" value="VxPx cargo-targeting to cilium"/>
</dbReference>
<dbReference type="Reactome" id="R-DDI-6807878">
    <property type="pathway name" value="COPI-mediated anterograde transport"/>
</dbReference>
<dbReference type="Reactome" id="R-DDI-6811434">
    <property type="pathway name" value="COPI-dependent Golgi-to-ER retrograde traffic"/>
</dbReference>
<dbReference type="Reactome" id="R-DDI-6811438">
    <property type="pathway name" value="Intra-Golgi traffic"/>
</dbReference>
<dbReference type="PRO" id="PR:Q54I24"/>
<dbReference type="Proteomes" id="UP000002195">
    <property type="component" value="Chromosome 5"/>
</dbReference>
<dbReference type="GO" id="GO:0005737">
    <property type="term" value="C:cytoplasm"/>
    <property type="evidence" value="ECO:0000318"/>
    <property type="project" value="GO_Central"/>
</dbReference>
<dbReference type="GO" id="GO:0005794">
    <property type="term" value="C:Golgi apparatus"/>
    <property type="evidence" value="ECO:0007669"/>
    <property type="project" value="UniProtKB-SubCell"/>
</dbReference>
<dbReference type="GO" id="GO:0005525">
    <property type="term" value="F:GTP binding"/>
    <property type="evidence" value="ECO:0000318"/>
    <property type="project" value="GO_Central"/>
</dbReference>
<dbReference type="GO" id="GO:0003924">
    <property type="term" value="F:GTPase activity"/>
    <property type="evidence" value="ECO:0007669"/>
    <property type="project" value="InterPro"/>
</dbReference>
<dbReference type="GO" id="GO:0006886">
    <property type="term" value="P:intracellular protein transport"/>
    <property type="evidence" value="ECO:0000318"/>
    <property type="project" value="GO_Central"/>
</dbReference>
<dbReference type="GO" id="GO:0016192">
    <property type="term" value="P:vesicle-mediated transport"/>
    <property type="evidence" value="ECO:0000318"/>
    <property type="project" value="GO_Central"/>
</dbReference>
<dbReference type="CDD" id="cd00878">
    <property type="entry name" value="Arf_Arl"/>
    <property type="match status" value="1"/>
</dbReference>
<dbReference type="FunFam" id="3.40.50.300:FF:001166">
    <property type="entry name" value="ADP-ribosylation factor D"/>
    <property type="match status" value="1"/>
</dbReference>
<dbReference type="Gene3D" id="3.40.50.300">
    <property type="entry name" value="P-loop containing nucleotide triphosphate hydrolases"/>
    <property type="match status" value="1"/>
</dbReference>
<dbReference type="InterPro" id="IPR027417">
    <property type="entry name" value="P-loop_NTPase"/>
</dbReference>
<dbReference type="InterPro" id="IPR005225">
    <property type="entry name" value="Small_GTP-bd"/>
</dbReference>
<dbReference type="InterPro" id="IPR024156">
    <property type="entry name" value="Small_GTPase_ARF"/>
</dbReference>
<dbReference type="InterPro" id="IPR006689">
    <property type="entry name" value="Small_GTPase_ARF/SAR"/>
</dbReference>
<dbReference type="NCBIfam" id="TIGR00231">
    <property type="entry name" value="small_GTP"/>
    <property type="match status" value="1"/>
</dbReference>
<dbReference type="PANTHER" id="PTHR11711">
    <property type="entry name" value="ADP RIBOSYLATION FACTOR-RELATED"/>
    <property type="match status" value="1"/>
</dbReference>
<dbReference type="Pfam" id="PF00025">
    <property type="entry name" value="Arf"/>
    <property type="match status" value="1"/>
</dbReference>
<dbReference type="PRINTS" id="PR00328">
    <property type="entry name" value="SAR1GTPBP"/>
</dbReference>
<dbReference type="SMART" id="SM00177">
    <property type="entry name" value="ARF"/>
    <property type="match status" value="1"/>
</dbReference>
<dbReference type="SMART" id="SM00178">
    <property type="entry name" value="SAR"/>
    <property type="match status" value="1"/>
</dbReference>
<dbReference type="SUPFAM" id="SSF52540">
    <property type="entry name" value="P-loop containing nucleoside triphosphate hydrolases"/>
    <property type="match status" value="1"/>
</dbReference>
<dbReference type="PROSITE" id="PS51417">
    <property type="entry name" value="ARF"/>
    <property type="match status" value="1"/>
</dbReference>
<reference key="1">
    <citation type="journal article" date="2005" name="Nature">
        <title>The genome of the social amoeba Dictyostelium discoideum.</title>
        <authorList>
            <person name="Eichinger L."/>
            <person name="Pachebat J.A."/>
            <person name="Gloeckner G."/>
            <person name="Rajandream M.A."/>
            <person name="Sucgang R."/>
            <person name="Berriman M."/>
            <person name="Song J."/>
            <person name="Olsen R."/>
            <person name="Szafranski K."/>
            <person name="Xu Q."/>
            <person name="Tunggal B."/>
            <person name="Kummerfeld S."/>
            <person name="Madera M."/>
            <person name="Konfortov B.A."/>
            <person name="Rivero F."/>
            <person name="Bankier A.T."/>
            <person name="Lehmann R."/>
            <person name="Hamlin N."/>
            <person name="Davies R."/>
            <person name="Gaudet P."/>
            <person name="Fey P."/>
            <person name="Pilcher K."/>
            <person name="Chen G."/>
            <person name="Saunders D."/>
            <person name="Sodergren E.J."/>
            <person name="Davis P."/>
            <person name="Kerhornou A."/>
            <person name="Nie X."/>
            <person name="Hall N."/>
            <person name="Anjard C."/>
            <person name="Hemphill L."/>
            <person name="Bason N."/>
            <person name="Farbrother P."/>
            <person name="Desany B."/>
            <person name="Just E."/>
            <person name="Morio T."/>
            <person name="Rost R."/>
            <person name="Churcher C.M."/>
            <person name="Cooper J."/>
            <person name="Haydock S."/>
            <person name="van Driessche N."/>
            <person name="Cronin A."/>
            <person name="Goodhead I."/>
            <person name="Muzny D.M."/>
            <person name="Mourier T."/>
            <person name="Pain A."/>
            <person name="Lu M."/>
            <person name="Harper D."/>
            <person name="Lindsay R."/>
            <person name="Hauser H."/>
            <person name="James K.D."/>
            <person name="Quiles M."/>
            <person name="Madan Babu M."/>
            <person name="Saito T."/>
            <person name="Buchrieser C."/>
            <person name="Wardroper A."/>
            <person name="Felder M."/>
            <person name="Thangavelu M."/>
            <person name="Johnson D."/>
            <person name="Knights A."/>
            <person name="Loulseged H."/>
            <person name="Mungall K.L."/>
            <person name="Oliver K."/>
            <person name="Price C."/>
            <person name="Quail M.A."/>
            <person name="Urushihara H."/>
            <person name="Hernandez J."/>
            <person name="Rabbinowitsch E."/>
            <person name="Steffen D."/>
            <person name="Sanders M."/>
            <person name="Ma J."/>
            <person name="Kohara Y."/>
            <person name="Sharp S."/>
            <person name="Simmonds M.N."/>
            <person name="Spiegler S."/>
            <person name="Tivey A."/>
            <person name="Sugano S."/>
            <person name="White B."/>
            <person name="Walker D."/>
            <person name="Woodward J.R."/>
            <person name="Winckler T."/>
            <person name="Tanaka Y."/>
            <person name="Shaulsky G."/>
            <person name="Schleicher M."/>
            <person name="Weinstock G.M."/>
            <person name="Rosenthal A."/>
            <person name="Cox E.C."/>
            <person name="Chisholm R.L."/>
            <person name="Gibbs R.A."/>
            <person name="Loomis W.F."/>
            <person name="Platzer M."/>
            <person name="Kay R.R."/>
            <person name="Williams J.G."/>
            <person name="Dear P.H."/>
            <person name="Noegel A.A."/>
            <person name="Barrell B.G."/>
            <person name="Kuspa A."/>
        </authorList>
    </citation>
    <scope>NUCLEOTIDE SEQUENCE [LARGE SCALE GENOMIC DNA]</scope>
    <source>
        <strain>AX4</strain>
    </source>
</reference>
<evidence type="ECO:0000250" key="1"/>
<evidence type="ECO:0000256" key="2">
    <source>
        <dbReference type="SAM" id="MobiDB-lite"/>
    </source>
</evidence>
<evidence type="ECO:0000305" key="3"/>
<sequence>MGISSSNPFSSIFKSKAIKLLMLGLDGSGKTTILYKLMLNEVVSTISTLGYNVETIQHKHLNLTLWDLAGEERIRTLWKPFYNKCTAIIFVVDSSDRLRIDEAASELAKLMKEEELKGCSLLIFATKQDCISPMEIPELTDQLGLHDIKDRRWYVQPTRTLEGIGIYEGLDWLSTKIIEDRKSKSFKSKFSFSNKSKQQKSNSQPNTPRKNIQMMT</sequence>
<organism>
    <name type="scientific">Dictyostelium discoideum</name>
    <name type="common">Social amoeba</name>
    <dbReference type="NCBI Taxonomy" id="44689"/>
    <lineage>
        <taxon>Eukaryota</taxon>
        <taxon>Amoebozoa</taxon>
        <taxon>Evosea</taxon>
        <taxon>Eumycetozoa</taxon>
        <taxon>Dictyostelia</taxon>
        <taxon>Dictyosteliales</taxon>
        <taxon>Dictyosteliaceae</taxon>
        <taxon>Dictyostelium</taxon>
    </lineage>
</organism>
<name>ARFD_DICDI</name>
<feature type="chain" id="PRO_0000365728" description="ADP-ribosylation factor D">
    <location>
        <begin position="1"/>
        <end position="216"/>
    </location>
</feature>
<feature type="region of interest" description="Disordered" evidence="2">
    <location>
        <begin position="188"/>
        <end position="216"/>
    </location>
</feature>
<feature type="compositionally biased region" description="Low complexity" evidence="2">
    <location>
        <begin position="188"/>
        <end position="204"/>
    </location>
</feature>
<feature type="compositionally biased region" description="Polar residues" evidence="2">
    <location>
        <begin position="205"/>
        <end position="216"/>
    </location>
</feature>
<gene>
    <name type="primary">arrD</name>
    <name type="ORF">DDB_G0289069</name>
</gene>
<proteinExistence type="inferred from homology"/>